<proteinExistence type="evidence at transcript level"/>
<protein>
    <recommendedName>
        <fullName>14-3-3-like protein</fullName>
    </recommendedName>
</protein>
<sequence length="259" mass="29395">MADSREENVYMAKLAEQAERYEEMVEFMEKVAKVDVEELTVEERNLLSVAYKNVIGARRASWRIISSIEQKEESRGNEDHVSSIKEYRVKIEAELSKICDGILSLLESHLVPSASTAESKVFYLKMKGDYHRYLAEFKTGARERKEAAENTLLAYKSAQDIALAELTPTHPIRLGLALNFSVFYYEILNSPDRACNLAKQAFDDAIAELDTLGEESYKDSTLIMQLLRDNLTLWTSDTTDDAEDEIREGSKQESGDGQQ</sequence>
<reference key="1">
    <citation type="submission" date="1996-05" db="EMBL/GenBank/DDBJ databases">
        <authorList>
            <person name="Wilczynski G."/>
            <person name="Szopa J."/>
        </authorList>
    </citation>
    <scope>NUCLEOTIDE SEQUENCE [MRNA]</scope>
    <source>
        <strain>cv. Desiree</strain>
    </source>
</reference>
<keyword id="KW-1185">Reference proteome</keyword>
<name>14331_SOLTU</name>
<feature type="chain" id="PRO_0000058698" description="14-3-3-like protein">
    <location>
        <begin position="1"/>
        <end position="259"/>
    </location>
</feature>
<feature type="region of interest" description="Disordered" evidence="1">
    <location>
        <begin position="237"/>
        <end position="259"/>
    </location>
</feature>
<feature type="compositionally biased region" description="Basic and acidic residues" evidence="1">
    <location>
        <begin position="247"/>
        <end position="259"/>
    </location>
</feature>
<comment type="tissue specificity">
    <text>Leaves specific.</text>
</comment>
<comment type="similarity">
    <text evidence="2">Belongs to the 14-3-3 family.</text>
</comment>
<organism>
    <name type="scientific">Solanum tuberosum</name>
    <name type="common">Potato</name>
    <dbReference type="NCBI Taxonomy" id="4113"/>
    <lineage>
        <taxon>Eukaryota</taxon>
        <taxon>Viridiplantae</taxon>
        <taxon>Streptophyta</taxon>
        <taxon>Embryophyta</taxon>
        <taxon>Tracheophyta</taxon>
        <taxon>Spermatophyta</taxon>
        <taxon>Magnoliopsida</taxon>
        <taxon>eudicotyledons</taxon>
        <taxon>Gunneridae</taxon>
        <taxon>Pentapetalae</taxon>
        <taxon>asterids</taxon>
        <taxon>lamiids</taxon>
        <taxon>Solanales</taxon>
        <taxon>Solanaceae</taxon>
        <taxon>Solanoideae</taxon>
        <taxon>Solaneae</taxon>
        <taxon>Solanum</taxon>
    </lineage>
</organism>
<evidence type="ECO:0000256" key="1">
    <source>
        <dbReference type="SAM" id="MobiDB-lite"/>
    </source>
</evidence>
<evidence type="ECO:0000305" key="2"/>
<dbReference type="EMBL" id="X97724">
    <property type="protein sequence ID" value="CAA66309.1"/>
    <property type="molecule type" value="mRNA"/>
</dbReference>
<dbReference type="RefSeq" id="NP_001275262.1">
    <property type="nucleotide sequence ID" value="NM_001288333.1"/>
</dbReference>
<dbReference type="SMR" id="Q41418"/>
<dbReference type="FunCoup" id="Q41418">
    <property type="interactions" value="2867"/>
</dbReference>
<dbReference type="STRING" id="4113.Q41418"/>
<dbReference type="PaxDb" id="4113-PGSC0003DMT400050389"/>
<dbReference type="GeneID" id="102580656"/>
<dbReference type="KEGG" id="sot:102580656"/>
<dbReference type="eggNOG" id="KOG0841">
    <property type="taxonomic scope" value="Eukaryota"/>
</dbReference>
<dbReference type="InParanoid" id="Q41418"/>
<dbReference type="OrthoDB" id="10260625at2759"/>
<dbReference type="Proteomes" id="UP000011115">
    <property type="component" value="Unassembled WGS sequence"/>
</dbReference>
<dbReference type="ExpressionAtlas" id="Q41418">
    <property type="expression patterns" value="baseline and differential"/>
</dbReference>
<dbReference type="GO" id="GO:0005737">
    <property type="term" value="C:cytoplasm"/>
    <property type="evidence" value="ECO:0000318"/>
    <property type="project" value="GO_Central"/>
</dbReference>
<dbReference type="GO" id="GO:0008104">
    <property type="term" value="P:protein localization"/>
    <property type="evidence" value="ECO:0000318"/>
    <property type="project" value="GO_Central"/>
</dbReference>
<dbReference type="GO" id="GO:0007165">
    <property type="term" value="P:signal transduction"/>
    <property type="evidence" value="ECO:0000318"/>
    <property type="project" value="GO_Central"/>
</dbReference>
<dbReference type="FunFam" id="1.20.190.20:FF:000002">
    <property type="entry name" value="14-3-3 protein epsilon"/>
    <property type="match status" value="1"/>
</dbReference>
<dbReference type="Gene3D" id="1.20.190.20">
    <property type="entry name" value="14-3-3 domain"/>
    <property type="match status" value="1"/>
</dbReference>
<dbReference type="InterPro" id="IPR000308">
    <property type="entry name" value="14-3-3"/>
</dbReference>
<dbReference type="InterPro" id="IPR023409">
    <property type="entry name" value="14-3-3_CS"/>
</dbReference>
<dbReference type="InterPro" id="IPR036815">
    <property type="entry name" value="14-3-3_dom_sf"/>
</dbReference>
<dbReference type="InterPro" id="IPR023410">
    <property type="entry name" value="14-3-3_domain"/>
</dbReference>
<dbReference type="PANTHER" id="PTHR18860">
    <property type="entry name" value="14-3-3 PROTEIN"/>
    <property type="match status" value="1"/>
</dbReference>
<dbReference type="Pfam" id="PF00244">
    <property type="entry name" value="14-3-3"/>
    <property type="match status" value="1"/>
</dbReference>
<dbReference type="PIRSF" id="PIRSF000868">
    <property type="entry name" value="14-3-3"/>
    <property type="match status" value="1"/>
</dbReference>
<dbReference type="PRINTS" id="PR00305">
    <property type="entry name" value="1433ZETA"/>
</dbReference>
<dbReference type="SMART" id="SM00101">
    <property type="entry name" value="14_3_3"/>
    <property type="match status" value="1"/>
</dbReference>
<dbReference type="SUPFAM" id="SSF48445">
    <property type="entry name" value="14-3-3 protein"/>
    <property type="match status" value="1"/>
</dbReference>
<dbReference type="PROSITE" id="PS00796">
    <property type="entry name" value="1433_1"/>
    <property type="match status" value="1"/>
</dbReference>
<dbReference type="PROSITE" id="PS00797">
    <property type="entry name" value="1433_2"/>
    <property type="match status" value="1"/>
</dbReference>
<accession>Q41418</accession>